<reference key="1">
    <citation type="journal article" date="2002" name="Lancet">
        <title>Genome and virulence determinants of high virulence community-acquired MRSA.</title>
        <authorList>
            <person name="Baba T."/>
            <person name="Takeuchi F."/>
            <person name="Kuroda M."/>
            <person name="Yuzawa H."/>
            <person name="Aoki K."/>
            <person name="Oguchi A."/>
            <person name="Nagai Y."/>
            <person name="Iwama N."/>
            <person name="Asano K."/>
            <person name="Naimi T."/>
            <person name="Kuroda H."/>
            <person name="Cui L."/>
            <person name="Yamamoto K."/>
            <person name="Hiramatsu K."/>
        </authorList>
    </citation>
    <scope>NUCLEOTIDE SEQUENCE [LARGE SCALE GENOMIC DNA]</scope>
    <source>
        <strain>MW2</strain>
    </source>
</reference>
<evidence type="ECO:0000255" key="1">
    <source>
        <dbReference type="HAMAP-Rule" id="MF_01333"/>
    </source>
</evidence>
<evidence type="ECO:0000305" key="2"/>
<feature type="chain" id="PRO_0000124991" description="Large ribosomal subunit protein uL5">
    <location>
        <begin position="1"/>
        <end position="179"/>
    </location>
</feature>
<dbReference type="EMBL" id="BA000033">
    <property type="protein sequence ID" value="BAB96022.1"/>
    <property type="molecule type" value="Genomic_DNA"/>
</dbReference>
<dbReference type="RefSeq" id="WP_001080824.1">
    <property type="nucleotide sequence ID" value="NC_003923.1"/>
</dbReference>
<dbReference type="PDB" id="8Y36">
    <property type="method" value="EM"/>
    <property type="resolution" value="2.65 A"/>
    <property type="chains" value="F=2-176"/>
</dbReference>
<dbReference type="PDB" id="8Y37">
    <property type="method" value="EM"/>
    <property type="resolution" value="2.53 A"/>
    <property type="chains" value="F=2-176"/>
</dbReference>
<dbReference type="PDB" id="8Y38">
    <property type="method" value="EM"/>
    <property type="resolution" value="2.58 A"/>
    <property type="chains" value="F=2-176"/>
</dbReference>
<dbReference type="PDB" id="8Y39">
    <property type="method" value="EM"/>
    <property type="resolution" value="3.60 A"/>
    <property type="chains" value="F=2-176"/>
</dbReference>
<dbReference type="PDBsum" id="8Y36"/>
<dbReference type="PDBsum" id="8Y37"/>
<dbReference type="PDBsum" id="8Y38"/>
<dbReference type="PDBsum" id="8Y39"/>
<dbReference type="EMDB" id="EMD-38873"/>
<dbReference type="EMDB" id="EMD-38874"/>
<dbReference type="EMDB" id="EMD-38875"/>
<dbReference type="EMDB" id="EMD-38876"/>
<dbReference type="SMR" id="Q7A083"/>
<dbReference type="KEGG" id="sam:MW2157"/>
<dbReference type="HOGENOM" id="CLU_061015_2_1_9"/>
<dbReference type="GO" id="GO:1990904">
    <property type="term" value="C:ribonucleoprotein complex"/>
    <property type="evidence" value="ECO:0007669"/>
    <property type="project" value="UniProtKB-KW"/>
</dbReference>
<dbReference type="GO" id="GO:0005840">
    <property type="term" value="C:ribosome"/>
    <property type="evidence" value="ECO:0007669"/>
    <property type="project" value="UniProtKB-KW"/>
</dbReference>
<dbReference type="GO" id="GO:0019843">
    <property type="term" value="F:rRNA binding"/>
    <property type="evidence" value="ECO:0007669"/>
    <property type="project" value="UniProtKB-UniRule"/>
</dbReference>
<dbReference type="GO" id="GO:0003735">
    <property type="term" value="F:structural constituent of ribosome"/>
    <property type="evidence" value="ECO:0007669"/>
    <property type="project" value="InterPro"/>
</dbReference>
<dbReference type="GO" id="GO:0000049">
    <property type="term" value="F:tRNA binding"/>
    <property type="evidence" value="ECO:0007669"/>
    <property type="project" value="UniProtKB-UniRule"/>
</dbReference>
<dbReference type="GO" id="GO:0006412">
    <property type="term" value="P:translation"/>
    <property type="evidence" value="ECO:0007669"/>
    <property type="project" value="UniProtKB-UniRule"/>
</dbReference>
<dbReference type="FunFam" id="3.30.1440.10:FF:000001">
    <property type="entry name" value="50S ribosomal protein L5"/>
    <property type="match status" value="1"/>
</dbReference>
<dbReference type="Gene3D" id="3.30.1440.10">
    <property type="match status" value="1"/>
</dbReference>
<dbReference type="HAMAP" id="MF_01333_B">
    <property type="entry name" value="Ribosomal_uL5_B"/>
    <property type="match status" value="1"/>
</dbReference>
<dbReference type="InterPro" id="IPR002132">
    <property type="entry name" value="Ribosomal_uL5"/>
</dbReference>
<dbReference type="InterPro" id="IPR020930">
    <property type="entry name" value="Ribosomal_uL5_bac-type"/>
</dbReference>
<dbReference type="InterPro" id="IPR031309">
    <property type="entry name" value="Ribosomal_uL5_C"/>
</dbReference>
<dbReference type="InterPro" id="IPR020929">
    <property type="entry name" value="Ribosomal_uL5_CS"/>
</dbReference>
<dbReference type="InterPro" id="IPR022803">
    <property type="entry name" value="Ribosomal_uL5_dom_sf"/>
</dbReference>
<dbReference type="InterPro" id="IPR031310">
    <property type="entry name" value="Ribosomal_uL5_N"/>
</dbReference>
<dbReference type="NCBIfam" id="NF000585">
    <property type="entry name" value="PRK00010.1"/>
    <property type="match status" value="1"/>
</dbReference>
<dbReference type="PANTHER" id="PTHR11994">
    <property type="entry name" value="60S RIBOSOMAL PROTEIN L11-RELATED"/>
    <property type="match status" value="1"/>
</dbReference>
<dbReference type="Pfam" id="PF00281">
    <property type="entry name" value="Ribosomal_L5"/>
    <property type="match status" value="1"/>
</dbReference>
<dbReference type="Pfam" id="PF00673">
    <property type="entry name" value="Ribosomal_L5_C"/>
    <property type="match status" value="1"/>
</dbReference>
<dbReference type="PIRSF" id="PIRSF002161">
    <property type="entry name" value="Ribosomal_L5"/>
    <property type="match status" value="1"/>
</dbReference>
<dbReference type="SUPFAM" id="SSF55282">
    <property type="entry name" value="RL5-like"/>
    <property type="match status" value="1"/>
</dbReference>
<dbReference type="PROSITE" id="PS00358">
    <property type="entry name" value="RIBOSOMAL_L5"/>
    <property type="match status" value="1"/>
</dbReference>
<accession>Q7A083</accession>
<comment type="function">
    <text evidence="1">This is one of the proteins that bind and probably mediate the attachment of the 5S RNA into the large ribosomal subunit, where it forms part of the central protuberance. In the 70S ribosome it contacts protein S13 of the 30S subunit (bridge B1b), connecting the 2 subunits; this bridge is implicated in subunit movement. Contacts the P site tRNA; the 5S rRNA and some of its associated proteins might help stabilize positioning of ribosome-bound tRNAs.</text>
</comment>
<comment type="subunit">
    <text evidence="1">Part of the 50S ribosomal subunit; part of the 5S rRNA/L5/L18/L25 subcomplex. Contacts the 5S rRNA and the P site tRNA. Forms a bridge to the 30S subunit in the 70S ribosome.</text>
</comment>
<comment type="similarity">
    <text evidence="1">Belongs to the universal ribosomal protein uL5 family.</text>
</comment>
<name>RL5_STAAW</name>
<protein>
    <recommendedName>
        <fullName evidence="1">Large ribosomal subunit protein uL5</fullName>
    </recommendedName>
    <alternativeName>
        <fullName evidence="2">50S ribosomal protein L5</fullName>
    </alternativeName>
</protein>
<proteinExistence type="evidence at protein level"/>
<sequence length="179" mass="20267">MNRLKEKFNTEVTENLMKKFNYSSVMEVPKIDKIVVNMGVGDAVQNSKVLDNAVEELELITGQKPLVTKAKKSIATFRLREGMPIGAKVTLRGERMYEFLDKLISVSLPRVRDFQGVSKKAFDGRGNYTLGVKEQLIFPEIDYDKVSKVRGMDIVIVTTANTDEEARELLANFGMPFRK</sequence>
<organism>
    <name type="scientific">Staphylococcus aureus (strain MW2)</name>
    <dbReference type="NCBI Taxonomy" id="196620"/>
    <lineage>
        <taxon>Bacteria</taxon>
        <taxon>Bacillati</taxon>
        <taxon>Bacillota</taxon>
        <taxon>Bacilli</taxon>
        <taxon>Bacillales</taxon>
        <taxon>Staphylococcaceae</taxon>
        <taxon>Staphylococcus</taxon>
    </lineage>
</organism>
<keyword id="KW-0002">3D-structure</keyword>
<keyword id="KW-0687">Ribonucleoprotein</keyword>
<keyword id="KW-0689">Ribosomal protein</keyword>
<keyword id="KW-0694">RNA-binding</keyword>
<keyword id="KW-0699">rRNA-binding</keyword>
<keyword id="KW-0820">tRNA-binding</keyword>
<gene>
    <name evidence="1" type="primary">rplE</name>
    <name type="ordered locus">MW2157</name>
</gene>